<gene>
    <name type="ordered locus">TP_0573</name>
</gene>
<accession>O83583</accession>
<name>Y573_TREPA</name>
<dbReference type="EMBL" id="AE000520">
    <property type="protein sequence ID" value="AAC65550.1"/>
    <property type="molecule type" value="Genomic_DNA"/>
</dbReference>
<dbReference type="PIR" id="C71309">
    <property type="entry name" value="C71309"/>
</dbReference>
<dbReference type="IntAct" id="O83583">
    <property type="interactions" value="3"/>
</dbReference>
<dbReference type="EnsemblBacteria" id="AAC65550">
    <property type="protein sequence ID" value="AAC65550"/>
    <property type="gene ID" value="TP_0573"/>
</dbReference>
<dbReference type="KEGG" id="tpa:TP_0573"/>
<dbReference type="HOGENOM" id="CLU_3405987_0_0_12"/>
<dbReference type="Proteomes" id="UP000000811">
    <property type="component" value="Chromosome"/>
</dbReference>
<keyword id="KW-1185">Reference proteome</keyword>
<proteinExistence type="predicted"/>
<feature type="chain" id="PRO_0000202276" description="Uncharacterized protein TP_0573">
    <location>
        <begin position="1"/>
        <end position="30"/>
    </location>
</feature>
<sequence>MQTFSLLVAYKIFTDGTETKRVHASKAKHA</sequence>
<reference key="1">
    <citation type="journal article" date="1998" name="Science">
        <title>Complete genome sequence of Treponema pallidum, the syphilis spirochete.</title>
        <authorList>
            <person name="Fraser C.M."/>
            <person name="Norris S.J."/>
            <person name="Weinstock G.M."/>
            <person name="White O."/>
            <person name="Sutton G.G."/>
            <person name="Dodson R.J."/>
            <person name="Gwinn M.L."/>
            <person name="Hickey E.K."/>
            <person name="Clayton R.A."/>
            <person name="Ketchum K.A."/>
            <person name="Sodergren E."/>
            <person name="Hardham J.M."/>
            <person name="McLeod M.P."/>
            <person name="Salzberg S.L."/>
            <person name="Peterson J.D."/>
            <person name="Khalak H.G."/>
            <person name="Richardson D.L."/>
            <person name="Howell J.K."/>
            <person name="Chidambaram M."/>
            <person name="Utterback T.R."/>
            <person name="McDonald L.A."/>
            <person name="Artiach P."/>
            <person name="Bowman C."/>
            <person name="Cotton M.D."/>
            <person name="Fujii C."/>
            <person name="Garland S.A."/>
            <person name="Hatch B."/>
            <person name="Horst K."/>
            <person name="Roberts K.M."/>
            <person name="Sandusky M."/>
            <person name="Weidman J.F."/>
            <person name="Smith H.O."/>
            <person name="Venter J.C."/>
        </authorList>
    </citation>
    <scope>NUCLEOTIDE SEQUENCE [LARGE SCALE GENOMIC DNA]</scope>
    <source>
        <strain>Nichols</strain>
    </source>
</reference>
<organism>
    <name type="scientific">Treponema pallidum (strain Nichols)</name>
    <dbReference type="NCBI Taxonomy" id="243276"/>
    <lineage>
        <taxon>Bacteria</taxon>
        <taxon>Pseudomonadati</taxon>
        <taxon>Spirochaetota</taxon>
        <taxon>Spirochaetia</taxon>
        <taxon>Spirochaetales</taxon>
        <taxon>Treponemataceae</taxon>
        <taxon>Treponema</taxon>
    </lineage>
</organism>
<protein>
    <recommendedName>
        <fullName>Uncharacterized protein TP_0573</fullName>
    </recommendedName>
</protein>